<proteinExistence type="inferred from homology"/>
<reference key="1">
    <citation type="journal article" date="2008" name="Chem. Biol. Interact.">
        <title>Extending the Bacillus cereus group genomics to putative food-borne pathogens of different toxicity.</title>
        <authorList>
            <person name="Lapidus A."/>
            <person name="Goltsman E."/>
            <person name="Auger S."/>
            <person name="Galleron N."/>
            <person name="Segurens B."/>
            <person name="Dossat C."/>
            <person name="Land M.L."/>
            <person name="Broussolle V."/>
            <person name="Brillard J."/>
            <person name="Guinebretiere M.-H."/>
            <person name="Sanchis V."/>
            <person name="Nguen-the C."/>
            <person name="Lereclus D."/>
            <person name="Richardson P."/>
            <person name="Wincker P."/>
            <person name="Weissenbach J."/>
            <person name="Ehrlich S.D."/>
            <person name="Sorokin A."/>
        </authorList>
    </citation>
    <scope>NUCLEOTIDE SEQUENCE [LARGE SCALE GENOMIC DNA]</scope>
    <source>
        <strain>DSM 22905 / CIP 110041 / 391-98 / NVH 391-98</strain>
    </source>
</reference>
<sequence>MKTAYVSATIVTLNEQNEVFENGYIIVEDHTIIEVQHGDFFKHDQVDEVVDLKGKWLLPGLVNTHTHIVMSLLRGIGDDMLLQPWLETRIWPLERQFTPELAVASTELGLLEMVKSGTTTFSDMFNPIGIDQDAIMETVRNSGMRAAVSRTLFSFGTKEDEKKAIQEAEKYVKRYYREHDMLTTMVAPHSPYTCSTEMLEECARIAMENNTMVHIHLSETEREVQDIEKQYGKRPVEYIESCGLFKRPTVIAHGVVLNENERTFLAEHDVRVAHNPNSNLKLGSGIANVKAMLEAGIKVGIATDSVASNNNLDMFEEMRIATLLQKGIHQDATALPVETALSLATKGAAEVIGMKQTGSIERGKCADFITIDPAKKPHLQPAEEVLSHLVYAASGKDVSDVVINGKQIMWNGECKTLDEERIIFEARRYKHGLQM</sequence>
<comment type="function">
    <text evidence="1">Catalyzes the deamination of 5-methylthioadenosine and S-adenosyl-L-homocysteine into 5-methylthioinosine and S-inosyl-L-homocysteine, respectively. Is also able to deaminate adenosine.</text>
</comment>
<comment type="catalytic activity">
    <reaction evidence="1">
        <text>S-adenosyl-L-homocysteine + H2O + H(+) = S-inosyl-L-homocysteine + NH4(+)</text>
        <dbReference type="Rhea" id="RHEA:20716"/>
        <dbReference type="ChEBI" id="CHEBI:15377"/>
        <dbReference type="ChEBI" id="CHEBI:15378"/>
        <dbReference type="ChEBI" id="CHEBI:28938"/>
        <dbReference type="ChEBI" id="CHEBI:57856"/>
        <dbReference type="ChEBI" id="CHEBI:57985"/>
        <dbReference type="EC" id="3.5.4.28"/>
    </reaction>
</comment>
<comment type="catalytic activity">
    <reaction evidence="1">
        <text>S-methyl-5'-thioadenosine + H2O + H(+) = S-methyl-5'-thioinosine + NH4(+)</text>
        <dbReference type="Rhea" id="RHEA:25025"/>
        <dbReference type="ChEBI" id="CHEBI:15377"/>
        <dbReference type="ChEBI" id="CHEBI:15378"/>
        <dbReference type="ChEBI" id="CHEBI:17509"/>
        <dbReference type="ChEBI" id="CHEBI:28938"/>
        <dbReference type="ChEBI" id="CHEBI:48595"/>
        <dbReference type="EC" id="3.5.4.31"/>
    </reaction>
</comment>
<comment type="cofactor">
    <cofactor evidence="1">
        <name>Zn(2+)</name>
        <dbReference type="ChEBI" id="CHEBI:29105"/>
    </cofactor>
    <text evidence="1">Binds 1 zinc ion per subunit.</text>
</comment>
<comment type="similarity">
    <text evidence="1">Belongs to the metallo-dependent hydrolases superfamily. MTA/SAH deaminase family.</text>
</comment>
<organism>
    <name type="scientific">Bacillus cytotoxicus (strain DSM 22905 / CIP 110041 / 391-98 / NVH 391-98)</name>
    <dbReference type="NCBI Taxonomy" id="315749"/>
    <lineage>
        <taxon>Bacteria</taxon>
        <taxon>Bacillati</taxon>
        <taxon>Bacillota</taxon>
        <taxon>Bacilli</taxon>
        <taxon>Bacillales</taxon>
        <taxon>Bacillaceae</taxon>
        <taxon>Bacillus</taxon>
        <taxon>Bacillus cereus group</taxon>
    </lineage>
</organism>
<gene>
    <name evidence="1" type="primary">mtaD</name>
    <name type="ordered locus">Bcer98_1460</name>
</gene>
<accession>A7GNR9</accession>
<keyword id="KW-0378">Hydrolase</keyword>
<keyword id="KW-0479">Metal-binding</keyword>
<keyword id="KW-0862">Zinc</keyword>
<evidence type="ECO:0000255" key="1">
    <source>
        <dbReference type="HAMAP-Rule" id="MF_01281"/>
    </source>
</evidence>
<name>MTAD_BACCN</name>
<feature type="chain" id="PRO_1000085894" description="5-methylthioadenosine/S-adenosylhomocysteine deaminase">
    <location>
        <begin position="1"/>
        <end position="435"/>
    </location>
</feature>
<feature type="binding site" evidence="1">
    <location>
        <position position="65"/>
    </location>
    <ligand>
        <name>Zn(2+)</name>
        <dbReference type="ChEBI" id="CHEBI:29105"/>
    </ligand>
</feature>
<feature type="binding site" evidence="1">
    <location>
        <position position="67"/>
    </location>
    <ligand>
        <name>Zn(2+)</name>
        <dbReference type="ChEBI" id="CHEBI:29105"/>
    </ligand>
</feature>
<feature type="binding site" evidence="1">
    <location>
        <position position="94"/>
    </location>
    <ligand>
        <name>substrate</name>
    </ligand>
</feature>
<feature type="binding site" evidence="1">
    <location>
        <position position="150"/>
    </location>
    <ligand>
        <name>substrate</name>
    </ligand>
</feature>
<feature type="binding site" evidence="1">
    <location>
        <position position="189"/>
    </location>
    <ligand>
        <name>substrate</name>
    </ligand>
</feature>
<feature type="binding site" evidence="1">
    <location>
        <position position="216"/>
    </location>
    <ligand>
        <name>Zn(2+)</name>
        <dbReference type="ChEBI" id="CHEBI:29105"/>
    </ligand>
</feature>
<feature type="binding site" evidence="1">
    <location>
        <position position="219"/>
    </location>
    <ligand>
        <name>substrate</name>
    </ligand>
</feature>
<feature type="binding site" evidence="1">
    <location>
        <position position="304"/>
    </location>
    <ligand>
        <name>substrate</name>
    </ligand>
</feature>
<feature type="binding site" evidence="1">
    <location>
        <position position="304"/>
    </location>
    <ligand>
        <name>Zn(2+)</name>
        <dbReference type="ChEBI" id="CHEBI:29105"/>
    </ligand>
</feature>
<dbReference type="EC" id="3.5.4.28" evidence="1"/>
<dbReference type="EC" id="3.5.4.31" evidence="1"/>
<dbReference type="EMBL" id="CP000764">
    <property type="protein sequence ID" value="ABS21777.1"/>
    <property type="molecule type" value="Genomic_DNA"/>
</dbReference>
<dbReference type="RefSeq" id="WP_012093951.1">
    <property type="nucleotide sequence ID" value="NC_009674.1"/>
</dbReference>
<dbReference type="SMR" id="A7GNR9"/>
<dbReference type="STRING" id="315749.Bcer98_1460"/>
<dbReference type="GeneID" id="33896798"/>
<dbReference type="KEGG" id="bcy:Bcer98_1460"/>
<dbReference type="eggNOG" id="COG0402">
    <property type="taxonomic scope" value="Bacteria"/>
</dbReference>
<dbReference type="HOGENOM" id="CLU_012358_2_0_9"/>
<dbReference type="OrthoDB" id="9807210at2"/>
<dbReference type="Proteomes" id="UP000002300">
    <property type="component" value="Chromosome"/>
</dbReference>
<dbReference type="GO" id="GO:0090614">
    <property type="term" value="F:5'-methylthioadenosine deaminase activity"/>
    <property type="evidence" value="ECO:0007669"/>
    <property type="project" value="UniProtKB-UniRule"/>
</dbReference>
<dbReference type="GO" id="GO:0046872">
    <property type="term" value="F:metal ion binding"/>
    <property type="evidence" value="ECO:0007669"/>
    <property type="project" value="UniProtKB-KW"/>
</dbReference>
<dbReference type="GO" id="GO:0050270">
    <property type="term" value="F:S-adenosylhomocysteine deaminase activity"/>
    <property type="evidence" value="ECO:0007669"/>
    <property type="project" value="UniProtKB-UniRule"/>
</dbReference>
<dbReference type="CDD" id="cd01298">
    <property type="entry name" value="ATZ_TRZ_like"/>
    <property type="match status" value="1"/>
</dbReference>
<dbReference type="FunFam" id="3.20.20.140:FF:000014">
    <property type="entry name" value="5-methylthioadenosine/S-adenosylhomocysteine deaminase"/>
    <property type="match status" value="1"/>
</dbReference>
<dbReference type="Gene3D" id="3.20.20.140">
    <property type="entry name" value="Metal-dependent hydrolases"/>
    <property type="match status" value="1"/>
</dbReference>
<dbReference type="Gene3D" id="2.30.40.10">
    <property type="entry name" value="Urease, subunit C, domain 1"/>
    <property type="match status" value="1"/>
</dbReference>
<dbReference type="HAMAP" id="MF_01281">
    <property type="entry name" value="MTA_SAH_deamin"/>
    <property type="match status" value="1"/>
</dbReference>
<dbReference type="InterPro" id="IPR006680">
    <property type="entry name" value="Amidohydro-rel"/>
</dbReference>
<dbReference type="InterPro" id="IPR023512">
    <property type="entry name" value="Deaminase_MtaD/DadD"/>
</dbReference>
<dbReference type="InterPro" id="IPR011059">
    <property type="entry name" value="Metal-dep_hydrolase_composite"/>
</dbReference>
<dbReference type="InterPro" id="IPR032466">
    <property type="entry name" value="Metal_Hydrolase"/>
</dbReference>
<dbReference type="InterPro" id="IPR050287">
    <property type="entry name" value="MTA/SAH_deaminase"/>
</dbReference>
<dbReference type="NCBIfam" id="NF012037">
    <property type="entry name" value="PRK15493.1"/>
    <property type="match status" value="1"/>
</dbReference>
<dbReference type="PANTHER" id="PTHR43794:SF11">
    <property type="entry name" value="AMIDOHYDROLASE-RELATED DOMAIN-CONTAINING PROTEIN"/>
    <property type="match status" value="1"/>
</dbReference>
<dbReference type="PANTHER" id="PTHR43794">
    <property type="entry name" value="AMINOHYDROLASE SSNA-RELATED"/>
    <property type="match status" value="1"/>
</dbReference>
<dbReference type="Pfam" id="PF01979">
    <property type="entry name" value="Amidohydro_1"/>
    <property type="match status" value="1"/>
</dbReference>
<dbReference type="SUPFAM" id="SSF51338">
    <property type="entry name" value="Composite domain of metallo-dependent hydrolases"/>
    <property type="match status" value="1"/>
</dbReference>
<dbReference type="SUPFAM" id="SSF51556">
    <property type="entry name" value="Metallo-dependent hydrolases"/>
    <property type="match status" value="1"/>
</dbReference>
<protein>
    <recommendedName>
        <fullName evidence="1">5-methylthioadenosine/S-adenosylhomocysteine deaminase</fullName>
        <shortName evidence="1">MTA/SAH deaminase</shortName>
        <ecNumber evidence="1">3.5.4.28</ecNumber>
        <ecNumber evidence="1">3.5.4.31</ecNumber>
    </recommendedName>
</protein>